<feature type="chain" id="PRO_0000345152" description="Autophagy-related protein 13">
    <location>
        <begin position="1"/>
        <end position="474"/>
    </location>
</feature>
<feature type="region of interest" description="Important for interaction with ATG101" evidence="2">
    <location>
        <begin position="127"/>
        <end position="134"/>
    </location>
</feature>
<feature type="region of interest" description="Disordered" evidence="4">
    <location>
        <begin position="295"/>
        <end position="324"/>
    </location>
</feature>
<feature type="region of interest" description="Disordered" evidence="4">
    <location>
        <begin position="368"/>
        <end position="402"/>
    </location>
</feature>
<feature type="short sequence motif" description="LIR" evidence="1">
    <location>
        <begin position="407"/>
        <end position="410"/>
    </location>
</feature>
<feature type="compositionally biased region" description="Polar residues" evidence="4">
    <location>
        <begin position="305"/>
        <end position="321"/>
    </location>
</feature>
<feature type="modified residue" description="N-acetylmethionine" evidence="2">
    <location>
        <position position="1"/>
    </location>
</feature>
<feature type="modified residue" description="Phosphoserine; by ULK1" evidence="2">
    <location>
        <position position="318"/>
    </location>
</feature>
<feature type="modified residue" description="Phosphoserine" evidence="2">
    <location>
        <position position="319"/>
    </location>
</feature>
<feature type="modified residue" description="Phosphoserine" evidence="2">
    <location>
        <position position="324"/>
    </location>
</feature>
<keyword id="KW-0007">Acetylation</keyword>
<keyword id="KW-0072">Autophagy</keyword>
<keyword id="KW-0963">Cytoplasm</keyword>
<keyword id="KW-0597">Phosphoprotein</keyword>
<keyword id="KW-1185">Reference proteome</keyword>
<evidence type="ECO:0000250" key="1"/>
<evidence type="ECO:0000250" key="2">
    <source>
        <dbReference type="UniProtKB" id="O75143"/>
    </source>
</evidence>
<evidence type="ECO:0000250" key="3">
    <source>
        <dbReference type="UniProtKB" id="Q91YI1"/>
    </source>
</evidence>
<evidence type="ECO:0000256" key="4">
    <source>
        <dbReference type="SAM" id="MobiDB-lite"/>
    </source>
</evidence>
<evidence type="ECO:0000305" key="5"/>
<dbReference type="EMBL" id="AB222161">
    <property type="protein sequence ID" value="BAF62406.1"/>
    <property type="molecule type" value="mRNA"/>
</dbReference>
<dbReference type="RefSeq" id="NP_001092013.1">
    <property type="nucleotide sequence ID" value="NM_001098543.1"/>
</dbReference>
<dbReference type="SMR" id="A5A6N3"/>
<dbReference type="STRING" id="9598.ENSPTRP00000079168"/>
<dbReference type="PaxDb" id="9598-ENSPTRP00000006164"/>
<dbReference type="GeneID" id="451155"/>
<dbReference type="CTD" id="9776"/>
<dbReference type="eggNOG" id="KOG3874">
    <property type="taxonomic scope" value="Eukaryota"/>
</dbReference>
<dbReference type="InParanoid" id="A5A6N3"/>
<dbReference type="Proteomes" id="UP000002277">
    <property type="component" value="Unplaced"/>
</dbReference>
<dbReference type="GO" id="GO:1990316">
    <property type="term" value="C:Atg1/ULK1 kinase complex"/>
    <property type="evidence" value="ECO:0000318"/>
    <property type="project" value="GO_Central"/>
</dbReference>
<dbReference type="GO" id="GO:0005776">
    <property type="term" value="C:autophagosome"/>
    <property type="evidence" value="ECO:0000318"/>
    <property type="project" value="GO_Central"/>
</dbReference>
<dbReference type="GO" id="GO:0005829">
    <property type="term" value="C:cytosol"/>
    <property type="evidence" value="ECO:0000318"/>
    <property type="project" value="GO_Central"/>
</dbReference>
<dbReference type="GO" id="GO:0000407">
    <property type="term" value="C:phagophore assembly site"/>
    <property type="evidence" value="ECO:0000250"/>
    <property type="project" value="UniProtKB"/>
</dbReference>
<dbReference type="GO" id="GO:0019887">
    <property type="term" value="F:protein kinase regulator activity"/>
    <property type="evidence" value="ECO:0000318"/>
    <property type="project" value="GO_Central"/>
</dbReference>
<dbReference type="GO" id="GO:0000045">
    <property type="term" value="P:autophagosome assembly"/>
    <property type="evidence" value="ECO:0000250"/>
    <property type="project" value="UniProtKB"/>
</dbReference>
<dbReference type="GO" id="GO:0000423">
    <property type="term" value="P:mitophagy"/>
    <property type="evidence" value="ECO:0000318"/>
    <property type="project" value="GO_Central"/>
</dbReference>
<dbReference type="GO" id="GO:0034727">
    <property type="term" value="P:piecemeal microautophagy of the nucleus"/>
    <property type="evidence" value="ECO:0000318"/>
    <property type="project" value="GO_Central"/>
</dbReference>
<dbReference type="GO" id="GO:0034497">
    <property type="term" value="P:protein localization to phagophore assembly site"/>
    <property type="evidence" value="ECO:0000318"/>
    <property type="project" value="GO_Central"/>
</dbReference>
<dbReference type="FunFam" id="3.30.900.10:FF:000001">
    <property type="entry name" value="Autophagy-related protein 13"/>
    <property type="match status" value="1"/>
</dbReference>
<dbReference type="Gene3D" id="3.30.900.10">
    <property type="entry name" value="HORMA domain"/>
    <property type="match status" value="1"/>
</dbReference>
<dbReference type="InterPro" id="IPR040182">
    <property type="entry name" value="ATG13"/>
</dbReference>
<dbReference type="InterPro" id="IPR018731">
    <property type="entry name" value="Atg13_N"/>
</dbReference>
<dbReference type="InterPro" id="IPR036570">
    <property type="entry name" value="HORMA_dom_sf"/>
</dbReference>
<dbReference type="PANTHER" id="PTHR13430">
    <property type="match status" value="1"/>
</dbReference>
<dbReference type="PANTHER" id="PTHR13430:SF4">
    <property type="entry name" value="AUTOPHAGY-RELATED PROTEIN 13"/>
    <property type="match status" value="1"/>
</dbReference>
<dbReference type="Pfam" id="PF10033">
    <property type="entry name" value="ATG13"/>
    <property type="match status" value="1"/>
</dbReference>
<name>ATG13_PANTR</name>
<organism>
    <name type="scientific">Pan troglodytes</name>
    <name type="common">Chimpanzee</name>
    <dbReference type="NCBI Taxonomy" id="9598"/>
    <lineage>
        <taxon>Eukaryota</taxon>
        <taxon>Metazoa</taxon>
        <taxon>Chordata</taxon>
        <taxon>Craniata</taxon>
        <taxon>Vertebrata</taxon>
        <taxon>Euteleostomi</taxon>
        <taxon>Mammalia</taxon>
        <taxon>Eutheria</taxon>
        <taxon>Euarchontoglires</taxon>
        <taxon>Primates</taxon>
        <taxon>Haplorrhini</taxon>
        <taxon>Catarrhini</taxon>
        <taxon>Hominidae</taxon>
        <taxon>Pan</taxon>
    </lineage>
</organism>
<proteinExistence type="evidence at transcript level"/>
<reference key="1">
    <citation type="journal article" date="2007" name="Gene">
        <title>Mapping of chimpanzee full-length cDNAs onto the human genome unveils large potential divergence of the transcriptome.</title>
        <authorList>
            <person name="Sakate R."/>
            <person name="Suto Y."/>
            <person name="Imanishi T."/>
            <person name="Tanoue T."/>
            <person name="Hida M."/>
            <person name="Hayasaka I."/>
            <person name="Kusuda J."/>
            <person name="Gojobori T."/>
            <person name="Hashimoto K."/>
            <person name="Hirai M."/>
        </authorList>
    </citation>
    <scope>NUCLEOTIDE SEQUENCE [MRNA]</scope>
    <source>
        <tissue>Skin</tissue>
    </source>
</reference>
<sequence length="474" mass="52069">METDLNSQDRKDLDKFIKFFALKTVQVIVQARLGEKICTRSSSSPTGSDWFNLAIKDIPEITHEAKKALAGQLPAVGRSMCVEISLKTSEGDSMELEIWCLEMNEKCDKEIKVSYTVYNRLSLLLKSLLAITRVTPAYRLSRKQGHEYVILYRIYFGEVQLSGLGEGFQTVRVGTVGTPVGTITLSCAYRINLAFMSTRQFERTPPIMGIIIDHFVDRPYPSSSPMHPCNYRTAGEDTGVIYPSVEDSQEVCTTSFSTSPPSQLMVPGKEGGVPLAPNQPVHGTHADQERLATCTPSDGTHCAATPSSSEDTETVSNSSEGRASPHDVLETIFVRKVGAFVNKPINQVTLTSLDIPFAMFAPKNLELEDTDPMVNPPDSPETESPLQGSLHSDGSSGGSSGNTHDDFVMIDFKPAFSKDDILPMDLGTFYREFQNPPQLSSLSIDIGAQSMAEDLDSLPEKNVREFDAFVETLQ</sequence>
<accession>A5A6N3</accession>
<protein>
    <recommendedName>
        <fullName>Autophagy-related protein 13</fullName>
    </recommendedName>
</protein>
<comment type="function">
    <text evidence="2">Autophagy factor required for autophagosome formation and mitophagy. Target of the TOR kinase signaling pathway that regulates autophagy through the control of the phosphorylation status of ATG13 and ULK1, and the regulation of the ATG13-ULK1-RB1CC1 complex. Through its regulation of ULK1 activity, plays a role in the regulation of the kinase activity of mTORC1 and cell proliferation.</text>
</comment>
<comment type="subunit">
    <text evidence="2">Part of a complex consisting of ATG13, ULK1 and RB1CC1. Interacts with ATG101. Interacts with ULK1 (via C-terminus). Interacts with ULK2 (via C-terminus). Interacts (via the LIR motif) with GABARAP, GABARAPL, GABARAPL2. Interacts (via the LIR motif) with MAP1LC3A, MAP1LC3B and MAP1LC3C. Interacts with TAB2 and TAB3. Interacts with C9orf72.</text>
</comment>
<comment type="subcellular location">
    <subcellularLocation>
        <location evidence="3">Cytoplasm</location>
        <location evidence="3">Cytosol</location>
    </subcellularLocation>
    <subcellularLocation>
        <location evidence="3">Preautophagosomal structure</location>
    </subcellularLocation>
    <text evidence="3">Under starvation conditions, is localized to puncate structures primarily representing the isolation membrane; the isolation membrane sequesters a portion of the cytoplasm resulting in autophagosome formation.</text>
</comment>
<comment type="domain">
    <text evidence="2">The LIR motif (LC3-interacting region) is required for the interaction with the ATG8 family proteins GABARAP, GABARAPL, GABARAPL2, and MAP1LC3A.</text>
</comment>
<comment type="PTM">
    <text evidence="2">Phosphorylated by ULK1, ULK2 and mTOR. Phosphorylation status depends on nutrient-rich conditions; dephosphorylated during starvation or following treatment with rapamycin. ULK1-mediated phosphorylation of ATG13 at Ser-318 is required for efficient clearance of depolarized mitochondria.</text>
</comment>
<comment type="similarity">
    <text evidence="5">Belongs to the ATG13 family. Metazoan subfamily.</text>
</comment>
<gene>
    <name type="primary">ATG13</name>
</gene>